<name>FNTB_MOUSE</name>
<sequence>MASSSSFTYYCPPSSSPVWSEPLYSLRPEHVRERLQDDSVETVTSIEQAKVEEKIQEVFSSYKFNHLVPRLILQREKHFHYLKRGLRQLTDAYECLDASRPWLCYWILHSLELLDEPIPQIVATDVCQFLELCQSPDGGFGGGPGQYPHLAPTYAAVNALCIIGTEEAYNVINREKLLQYLYSLKQPDGSFLMHVGGEVDVRSAYCAASVASLTNIITPDLFEGTAEWIARCQNWEGGIGGVPGMEAHGGYTFCGLAALVILKKERSLNLKSLLQWVTSRQMRFEGGFQGRCNKLVDGCYSFWQAGLLPLLHRALHAQGDPALSMSHWMFHQQALQEYILMCCQCPAGGLLDKPGKSRDFYHTCYCLSGLSIAQHFGSGAMLHDMVMGVPENVLQPTHPVYNIGPEKVIQATTHFLQKPVPGFEECEDEVTSDPATD</sequence>
<proteinExistence type="evidence at protein level"/>
<feature type="chain" id="PRO_0000119762" description="Protein farnesyltransferase subunit beta">
    <location>
        <begin position="1"/>
        <end position="437"/>
    </location>
</feature>
<feature type="repeat" description="PFTB 1">
    <location>
        <begin position="123"/>
        <end position="164"/>
    </location>
</feature>
<feature type="repeat" description="PFTB 2">
    <location>
        <begin position="174"/>
        <end position="215"/>
    </location>
</feature>
<feature type="repeat" description="PFTB 3">
    <location>
        <begin position="222"/>
        <end position="263"/>
    </location>
</feature>
<feature type="repeat" description="PFTB 4">
    <location>
        <begin position="270"/>
        <end position="312"/>
    </location>
</feature>
<feature type="repeat" description="PFTB 5">
    <location>
        <begin position="332"/>
        <end position="374"/>
    </location>
</feature>
<feature type="binding site" evidence="1">
    <location>
        <begin position="248"/>
        <end position="251"/>
    </location>
    <ligand>
        <name>(2E,6E)-farnesyl diphosphate</name>
        <dbReference type="ChEBI" id="CHEBI:175763"/>
    </ligand>
</feature>
<feature type="binding site" evidence="1">
    <location>
        <begin position="291"/>
        <end position="294"/>
    </location>
    <ligand>
        <name>(2E,6E)-farnesyl diphosphate</name>
        <dbReference type="ChEBI" id="CHEBI:175763"/>
    </ligand>
</feature>
<feature type="binding site" evidence="1">
    <location>
        <position position="297"/>
    </location>
    <ligand>
        <name>Zn(2+)</name>
        <dbReference type="ChEBI" id="CHEBI:29105"/>
        <note>catalytic</note>
    </ligand>
</feature>
<feature type="binding site" evidence="1">
    <location>
        <position position="299"/>
    </location>
    <ligand>
        <name>Zn(2+)</name>
        <dbReference type="ChEBI" id="CHEBI:29105"/>
        <note>catalytic</note>
    </ligand>
</feature>
<feature type="binding site" evidence="1">
    <location>
        <begin position="300"/>
        <end position="303"/>
    </location>
    <ligand>
        <name>(2E,6E)-farnesyl diphosphate</name>
        <dbReference type="ChEBI" id="CHEBI:175763"/>
    </ligand>
</feature>
<feature type="binding site" evidence="1">
    <location>
        <position position="362"/>
    </location>
    <ligand>
        <name>Zn(2+)</name>
        <dbReference type="ChEBI" id="CHEBI:29105"/>
        <note>catalytic</note>
    </ligand>
</feature>
<feature type="site" description="Important for selectivity against geranylgeranyl diphosphate" evidence="1">
    <location>
        <position position="102"/>
    </location>
</feature>
<feature type="modified residue" description="Phosphoserine" evidence="5">
    <location>
        <position position="432"/>
    </location>
</feature>
<feature type="modified residue" description="Phosphothreonine" evidence="5">
    <location>
        <position position="436"/>
    </location>
</feature>
<accession>Q8K2I1</accession>
<reference key="1">
    <citation type="journal article" date="2004" name="Genome Res.">
        <title>The status, quality, and expansion of the NIH full-length cDNA project: the Mammalian Gene Collection (MGC).</title>
        <authorList>
            <consortium name="The MGC Project Team"/>
        </authorList>
    </citation>
    <scope>NUCLEOTIDE SEQUENCE [LARGE SCALE MRNA]</scope>
    <source>
        <strain>129</strain>
        <tissue>Mammary tumor</tissue>
    </source>
</reference>
<reference key="2">
    <citation type="journal article" date="2010" name="Cell">
        <title>A tissue-specific atlas of mouse protein phosphorylation and expression.</title>
        <authorList>
            <person name="Huttlin E.L."/>
            <person name="Jedrychowski M.P."/>
            <person name="Elias J.E."/>
            <person name="Goswami T."/>
            <person name="Rad R."/>
            <person name="Beausoleil S.A."/>
            <person name="Villen J."/>
            <person name="Haas W."/>
            <person name="Sowa M.E."/>
            <person name="Gygi S.P."/>
        </authorList>
    </citation>
    <scope>PHOSPHORYLATION [LARGE SCALE ANALYSIS] AT SER-432 AND THR-436</scope>
    <scope>IDENTIFICATION BY MASS SPECTROMETRY [LARGE SCALE ANALYSIS]</scope>
    <source>
        <tissue>Brain</tissue>
        <tissue>Brown adipose tissue</tissue>
        <tissue>Heart</tissue>
        <tissue>Kidney</tissue>
        <tissue>Lung</tissue>
        <tissue>Pancreas</tissue>
        <tissue>Spleen</tissue>
        <tissue>Testis</tissue>
    </source>
</reference>
<reference key="3">
    <citation type="journal article" date="2007" name="Proc. Natl. Acad. Sci. U.S.A.">
        <title>HIV protease inhibitors block the zinc metalloproteinase ZMPSTE24 and lead to an accumulation of prelamin A in cells.</title>
        <authorList>
            <person name="Coffinier C."/>
            <person name="Hudon S.E."/>
            <person name="Farber E.A."/>
            <person name="Chang S.Y."/>
            <person name="Hrycyna C.A."/>
            <person name="Young S.G."/>
            <person name="Fong L.G."/>
        </authorList>
    </citation>
    <scope>FUNCTION</scope>
</reference>
<reference key="4">
    <citation type="journal article" date="2011" name="Angew. Chem. Int. Ed. Engl.">
        <title>Structure-guided development of selective RabGGTase inhibitors.</title>
        <authorList>
            <person name="Bon R.S."/>
            <person name="Guo Z."/>
            <person name="Stigter E.A."/>
            <person name="Wetzel S."/>
            <person name="Menninger S."/>
            <person name="Wolf A."/>
            <person name="Choidas A."/>
            <person name="Alexandrov K."/>
            <person name="Blankenfeldt W."/>
            <person name="Goody R.S."/>
            <person name="Waldmann H."/>
        </authorList>
    </citation>
    <scope>X-RAY CRYSTALLOGRAPHY (2.10 ANGSTROMS) OF 2-427 IN COMPLEX WITH FNTA AND ZINC IONS</scope>
    <scope>SUBUNIT</scope>
    <scope>CATALYTIC ACTIVITY</scope>
    <scope>FUNCTION</scope>
    <scope>COFACTOR</scope>
</reference>
<dbReference type="EC" id="2.5.1.58" evidence="3"/>
<dbReference type="EMBL" id="BC031417">
    <property type="protein sequence ID" value="AAH31417.1"/>
    <property type="molecule type" value="mRNA"/>
</dbReference>
<dbReference type="CCDS" id="CCDS25998.1"/>
<dbReference type="RefSeq" id="NP_666039.1">
    <property type="nucleotide sequence ID" value="NM_145927.3"/>
</dbReference>
<dbReference type="PDB" id="3PZ4">
    <property type="method" value="X-ray"/>
    <property type="resolution" value="2.10 A"/>
    <property type="chains" value="B=2-427"/>
</dbReference>
<dbReference type="PDBsum" id="3PZ4"/>
<dbReference type="SMR" id="Q8K2I1"/>
<dbReference type="BioGRID" id="225746">
    <property type="interactions" value="8"/>
</dbReference>
<dbReference type="ComplexPortal" id="CPX-2185">
    <property type="entry name" value="Protein farnesyltransferase complex"/>
</dbReference>
<dbReference type="FunCoup" id="Q8K2I1">
    <property type="interactions" value="933"/>
</dbReference>
<dbReference type="STRING" id="10090.ENSMUSP00000035498"/>
<dbReference type="BindingDB" id="Q8K2I1"/>
<dbReference type="ChEMBL" id="CHEMBL2096912"/>
<dbReference type="iPTMnet" id="Q8K2I1"/>
<dbReference type="PhosphoSitePlus" id="Q8K2I1"/>
<dbReference type="PaxDb" id="10090-ENSMUSP00000035498"/>
<dbReference type="PeptideAtlas" id="Q8K2I1"/>
<dbReference type="ProteomicsDB" id="267612"/>
<dbReference type="Pumba" id="Q8K2I1"/>
<dbReference type="DNASU" id="110606"/>
<dbReference type="Ensembl" id="ENSMUST00000041008.10">
    <property type="protein sequence ID" value="ENSMUSP00000035498.10"/>
    <property type="gene ID" value="ENSMUSG00000033373.17"/>
</dbReference>
<dbReference type="GeneID" id="110606"/>
<dbReference type="KEGG" id="mmu:110606"/>
<dbReference type="UCSC" id="uc007nyu.1">
    <property type="organism name" value="mouse"/>
</dbReference>
<dbReference type="AGR" id="MGI:1861305"/>
<dbReference type="CTD" id="2342"/>
<dbReference type="MGI" id="MGI:1861305">
    <property type="gene designation" value="Fntb"/>
</dbReference>
<dbReference type="VEuPathDB" id="HostDB:ENSMUSG00000033373"/>
<dbReference type="eggNOG" id="KOG0365">
    <property type="taxonomic scope" value="Eukaryota"/>
</dbReference>
<dbReference type="GeneTree" id="ENSGT00950000183128"/>
<dbReference type="HOGENOM" id="CLU_028946_0_1_1"/>
<dbReference type="InParanoid" id="Q8K2I1"/>
<dbReference type="OMA" id="WCIYWIL"/>
<dbReference type="OrthoDB" id="12790at9989"/>
<dbReference type="PhylomeDB" id="Q8K2I1"/>
<dbReference type="TreeFam" id="TF353162"/>
<dbReference type="BRENDA" id="2.5.1.58">
    <property type="organism ID" value="3474"/>
</dbReference>
<dbReference type="Reactome" id="R-MMU-2514859">
    <property type="pathway name" value="Inactivation, recovery and regulation of the phototransduction cascade"/>
</dbReference>
<dbReference type="Reactome" id="R-MMU-9648002">
    <property type="pathway name" value="RAS processing"/>
</dbReference>
<dbReference type="BioGRID-ORCS" id="110606">
    <property type="hits" value="28 hits in 82 CRISPR screens"/>
</dbReference>
<dbReference type="ChiTaRS" id="Fntb">
    <property type="organism name" value="mouse"/>
</dbReference>
<dbReference type="PRO" id="PR:Q8K2I1"/>
<dbReference type="Proteomes" id="UP000000589">
    <property type="component" value="Chromosome 12"/>
</dbReference>
<dbReference type="RNAct" id="Q8K2I1">
    <property type="molecule type" value="protein"/>
</dbReference>
<dbReference type="Bgee" id="ENSMUSG00000033373">
    <property type="expression patterns" value="Expressed in yolk sac and 213 other cell types or tissues"/>
</dbReference>
<dbReference type="ExpressionAtlas" id="Q8K2I1">
    <property type="expression patterns" value="baseline and differential"/>
</dbReference>
<dbReference type="GO" id="GO:0005965">
    <property type="term" value="C:protein farnesyltransferase complex"/>
    <property type="evidence" value="ECO:0000250"/>
    <property type="project" value="UniProtKB"/>
</dbReference>
<dbReference type="GO" id="GO:0004311">
    <property type="term" value="F:geranylgeranyl diphosphate synthase activity"/>
    <property type="evidence" value="ECO:0000315"/>
    <property type="project" value="MGI"/>
</dbReference>
<dbReference type="GO" id="GO:0004660">
    <property type="term" value="F:protein farnesyltransferase activity"/>
    <property type="evidence" value="ECO:0000250"/>
    <property type="project" value="UniProtKB"/>
</dbReference>
<dbReference type="GO" id="GO:0008270">
    <property type="term" value="F:zinc ion binding"/>
    <property type="evidence" value="ECO:0000250"/>
    <property type="project" value="UniProtKB"/>
</dbReference>
<dbReference type="GO" id="GO:0008283">
    <property type="term" value="P:cell population proliferation"/>
    <property type="evidence" value="ECO:0000315"/>
    <property type="project" value="MGI"/>
</dbReference>
<dbReference type="GO" id="GO:0048144">
    <property type="term" value="P:fibroblast proliferation"/>
    <property type="evidence" value="ECO:0000315"/>
    <property type="project" value="MGI"/>
</dbReference>
<dbReference type="GO" id="GO:0006629">
    <property type="term" value="P:lipid metabolic process"/>
    <property type="evidence" value="ECO:0007669"/>
    <property type="project" value="UniProtKB-KW"/>
</dbReference>
<dbReference type="GO" id="GO:0008285">
    <property type="term" value="P:negative regulation of cell population proliferation"/>
    <property type="evidence" value="ECO:0000315"/>
    <property type="project" value="MGI"/>
</dbReference>
<dbReference type="GO" id="GO:0008284">
    <property type="term" value="P:positive regulation of cell population proliferation"/>
    <property type="evidence" value="ECO:0000315"/>
    <property type="project" value="MGI"/>
</dbReference>
<dbReference type="GO" id="GO:0048146">
    <property type="term" value="P:positive regulation of fibroblast proliferation"/>
    <property type="evidence" value="ECO:0000315"/>
    <property type="project" value="MGI"/>
</dbReference>
<dbReference type="GO" id="GO:0018343">
    <property type="term" value="P:protein farnesylation"/>
    <property type="evidence" value="ECO:0000250"/>
    <property type="project" value="UniProtKB"/>
</dbReference>
<dbReference type="GO" id="GO:0048145">
    <property type="term" value="P:regulation of fibroblast proliferation"/>
    <property type="evidence" value="ECO:0000315"/>
    <property type="project" value="MGI"/>
</dbReference>
<dbReference type="GO" id="GO:0042060">
    <property type="term" value="P:wound healing"/>
    <property type="evidence" value="ECO:0000315"/>
    <property type="project" value="MGI"/>
</dbReference>
<dbReference type="CDD" id="cd02893">
    <property type="entry name" value="FTase"/>
    <property type="match status" value="1"/>
</dbReference>
<dbReference type="FunFam" id="1.50.10.20:FF:000007">
    <property type="entry name" value="Protein farnesyltransferase subunit beta"/>
    <property type="match status" value="1"/>
</dbReference>
<dbReference type="Gene3D" id="1.50.10.20">
    <property type="match status" value="1"/>
</dbReference>
<dbReference type="InterPro" id="IPR026872">
    <property type="entry name" value="FTB"/>
</dbReference>
<dbReference type="InterPro" id="IPR045089">
    <property type="entry name" value="PGGT1B-like"/>
</dbReference>
<dbReference type="InterPro" id="IPR001330">
    <property type="entry name" value="Prenyltrans"/>
</dbReference>
<dbReference type="InterPro" id="IPR008930">
    <property type="entry name" value="Terpenoid_cyclase/PrenylTrfase"/>
</dbReference>
<dbReference type="PANTHER" id="PTHR11774">
    <property type="entry name" value="GERANYLGERANYL TRANSFERASE TYPE BETA SUBUNIT"/>
    <property type="match status" value="1"/>
</dbReference>
<dbReference type="PANTHER" id="PTHR11774:SF6">
    <property type="entry name" value="PROTEIN FARNESYLTRANSFERASE SUBUNIT BETA"/>
    <property type="match status" value="1"/>
</dbReference>
<dbReference type="Pfam" id="PF00432">
    <property type="entry name" value="Prenyltrans"/>
    <property type="match status" value="1"/>
</dbReference>
<dbReference type="SFLD" id="SFLDG01015">
    <property type="entry name" value="Prenyltransferase_Like_1"/>
    <property type="match status" value="1"/>
</dbReference>
<dbReference type="SUPFAM" id="SSF48239">
    <property type="entry name" value="Terpenoid cyclases/Protein prenyltransferases"/>
    <property type="match status" value="1"/>
</dbReference>
<evidence type="ECO:0000250" key="1">
    <source>
        <dbReference type="UniProtKB" id="P49356"/>
    </source>
</evidence>
<evidence type="ECO:0000269" key="2">
    <source>
    </source>
</evidence>
<evidence type="ECO:0000269" key="3">
    <source>
    </source>
</evidence>
<evidence type="ECO:0000305" key="4"/>
<evidence type="ECO:0007744" key="5">
    <source>
    </source>
</evidence>
<keyword id="KW-0002">3D-structure</keyword>
<keyword id="KW-0443">Lipid metabolism</keyword>
<keyword id="KW-0479">Metal-binding</keyword>
<keyword id="KW-0597">Phosphoprotein</keyword>
<keyword id="KW-0637">Prenyltransferase</keyword>
<keyword id="KW-1185">Reference proteome</keyword>
<keyword id="KW-0677">Repeat</keyword>
<keyword id="KW-0808">Transferase</keyword>
<keyword id="KW-0862">Zinc</keyword>
<comment type="function">
    <text evidence="2 3">Essential subunit of the farnesyltransferase complex. Catalyzes the transfer of a farnesyl moiety from farnesyl diphosphate to a cysteine at the fourth position from the C-terminus of several proteins having the C-terminal sequence Cys-aliphatic-aliphatic-X.</text>
</comment>
<comment type="catalytic activity">
    <reaction evidence="3">
        <text>L-cysteinyl-[protein] + (2E,6E)-farnesyl diphosphate = S-(2E,6E)-farnesyl-L-cysteinyl-[protein] + diphosphate</text>
        <dbReference type="Rhea" id="RHEA:13345"/>
        <dbReference type="Rhea" id="RHEA-COMP:10131"/>
        <dbReference type="Rhea" id="RHEA-COMP:11535"/>
        <dbReference type="ChEBI" id="CHEBI:29950"/>
        <dbReference type="ChEBI" id="CHEBI:33019"/>
        <dbReference type="ChEBI" id="CHEBI:86019"/>
        <dbReference type="ChEBI" id="CHEBI:175763"/>
        <dbReference type="EC" id="2.5.1.58"/>
    </reaction>
</comment>
<comment type="cofactor">
    <cofactor evidence="3">
        <name>Zn(2+)</name>
        <dbReference type="ChEBI" id="CHEBI:29105"/>
    </cofactor>
    <text evidence="3">Binds 1 zinc ion per subunit.</text>
</comment>
<comment type="subunit">
    <text evidence="3">Heterodimer of FNTA and FNTB.</text>
</comment>
<comment type="similarity">
    <text evidence="4">Belongs to the protein prenyltransferase subunit beta family.</text>
</comment>
<protein>
    <recommendedName>
        <fullName>Protein farnesyltransferase subunit beta</fullName>
        <shortName>FTase-beta</shortName>
        <ecNumber evidence="3">2.5.1.58</ecNumber>
    </recommendedName>
    <alternativeName>
        <fullName>CAAX farnesyltransferase subunit beta</fullName>
    </alternativeName>
    <alternativeName>
        <fullName>Ras proteins prenyltransferase subunit beta</fullName>
    </alternativeName>
</protein>
<gene>
    <name type="primary">Fntb</name>
</gene>
<organism>
    <name type="scientific">Mus musculus</name>
    <name type="common">Mouse</name>
    <dbReference type="NCBI Taxonomy" id="10090"/>
    <lineage>
        <taxon>Eukaryota</taxon>
        <taxon>Metazoa</taxon>
        <taxon>Chordata</taxon>
        <taxon>Craniata</taxon>
        <taxon>Vertebrata</taxon>
        <taxon>Euteleostomi</taxon>
        <taxon>Mammalia</taxon>
        <taxon>Eutheria</taxon>
        <taxon>Euarchontoglires</taxon>
        <taxon>Glires</taxon>
        <taxon>Rodentia</taxon>
        <taxon>Myomorpha</taxon>
        <taxon>Muroidea</taxon>
        <taxon>Muridae</taxon>
        <taxon>Murinae</taxon>
        <taxon>Mus</taxon>
        <taxon>Mus</taxon>
    </lineage>
</organism>